<accession>A2STX0</accession>
<gene>
    <name evidence="1" type="primary">rps7</name>
    <name type="ordered locus">Mlab_1614</name>
</gene>
<keyword id="KW-1185">Reference proteome</keyword>
<keyword id="KW-0687">Ribonucleoprotein</keyword>
<keyword id="KW-0689">Ribosomal protein</keyword>
<keyword id="KW-0694">RNA-binding</keyword>
<keyword id="KW-0699">rRNA-binding</keyword>
<dbReference type="EMBL" id="CP000559">
    <property type="protein sequence ID" value="ABN07776.1"/>
    <property type="molecule type" value="Genomic_DNA"/>
</dbReference>
<dbReference type="RefSeq" id="WP_011833979.1">
    <property type="nucleotide sequence ID" value="NC_008942.1"/>
</dbReference>
<dbReference type="SMR" id="A2STX0"/>
<dbReference type="STRING" id="410358.Mlab_1614"/>
<dbReference type="GeneID" id="4794932"/>
<dbReference type="KEGG" id="mla:Mlab_1614"/>
<dbReference type="eggNOG" id="arCOG04254">
    <property type="taxonomic scope" value="Archaea"/>
</dbReference>
<dbReference type="HOGENOM" id="CLU_063975_0_0_2"/>
<dbReference type="OrthoDB" id="45346at2157"/>
<dbReference type="Proteomes" id="UP000000365">
    <property type="component" value="Chromosome"/>
</dbReference>
<dbReference type="GO" id="GO:0015935">
    <property type="term" value="C:small ribosomal subunit"/>
    <property type="evidence" value="ECO:0007669"/>
    <property type="project" value="InterPro"/>
</dbReference>
<dbReference type="GO" id="GO:0019843">
    <property type="term" value="F:rRNA binding"/>
    <property type="evidence" value="ECO:0007669"/>
    <property type="project" value="UniProtKB-UniRule"/>
</dbReference>
<dbReference type="GO" id="GO:0003735">
    <property type="term" value="F:structural constituent of ribosome"/>
    <property type="evidence" value="ECO:0007669"/>
    <property type="project" value="InterPro"/>
</dbReference>
<dbReference type="GO" id="GO:0006412">
    <property type="term" value="P:translation"/>
    <property type="evidence" value="ECO:0007669"/>
    <property type="project" value="UniProtKB-UniRule"/>
</dbReference>
<dbReference type="CDD" id="cd14867">
    <property type="entry name" value="uS7_Eukaryote"/>
    <property type="match status" value="1"/>
</dbReference>
<dbReference type="Gene3D" id="1.10.455.10">
    <property type="entry name" value="Ribosomal protein S7 domain"/>
    <property type="match status" value="1"/>
</dbReference>
<dbReference type="HAMAP" id="MF_00480_A">
    <property type="entry name" value="Ribosomal_uS7_A"/>
    <property type="match status" value="1"/>
</dbReference>
<dbReference type="InterPro" id="IPR000235">
    <property type="entry name" value="Ribosomal_uS7"/>
</dbReference>
<dbReference type="InterPro" id="IPR026018">
    <property type="entry name" value="Ribosomal_uS7_arc"/>
</dbReference>
<dbReference type="InterPro" id="IPR020606">
    <property type="entry name" value="Ribosomal_uS7_CS"/>
</dbReference>
<dbReference type="InterPro" id="IPR023798">
    <property type="entry name" value="Ribosomal_uS7_dom"/>
</dbReference>
<dbReference type="InterPro" id="IPR036823">
    <property type="entry name" value="Ribosomal_uS7_dom_sf"/>
</dbReference>
<dbReference type="InterPro" id="IPR005716">
    <property type="entry name" value="Ribosomal_uS7_euk/arc"/>
</dbReference>
<dbReference type="NCBIfam" id="NF003106">
    <property type="entry name" value="PRK04027.1"/>
    <property type="match status" value="1"/>
</dbReference>
<dbReference type="NCBIfam" id="TIGR01028">
    <property type="entry name" value="uS7_euk_arch"/>
    <property type="match status" value="1"/>
</dbReference>
<dbReference type="PANTHER" id="PTHR11205">
    <property type="entry name" value="RIBOSOMAL PROTEIN S7"/>
    <property type="match status" value="1"/>
</dbReference>
<dbReference type="Pfam" id="PF00177">
    <property type="entry name" value="Ribosomal_S7"/>
    <property type="match status" value="1"/>
</dbReference>
<dbReference type="PIRSF" id="PIRSF002122">
    <property type="entry name" value="RPS7p_RPS7a_RPS5e_RPS7o"/>
    <property type="match status" value="1"/>
</dbReference>
<dbReference type="SUPFAM" id="SSF47973">
    <property type="entry name" value="Ribosomal protein S7"/>
    <property type="match status" value="1"/>
</dbReference>
<dbReference type="PROSITE" id="PS00052">
    <property type="entry name" value="RIBOSOMAL_S7"/>
    <property type="match status" value="1"/>
</dbReference>
<organism>
    <name type="scientific">Methanocorpusculum labreanum (strain ATCC 43576 / DSM 4855 / Z)</name>
    <dbReference type="NCBI Taxonomy" id="410358"/>
    <lineage>
        <taxon>Archaea</taxon>
        <taxon>Methanobacteriati</taxon>
        <taxon>Methanobacteriota</taxon>
        <taxon>Stenosarchaea group</taxon>
        <taxon>Methanomicrobia</taxon>
        <taxon>Methanomicrobiales</taxon>
        <taxon>Methanocorpusculaceae</taxon>
        <taxon>Methanocorpusculum</taxon>
    </lineage>
</organism>
<sequence>MTEEAATSKILLFNKWDMSEVVVKDAGMVRYVTITSTEVPSSCGRLTQQQFTKSEMAIVERLINRLMQQEYNTGKKMMCTKMVMDAFDVINKKTKQNPLQVLVDAVANAGPREETVRLKYGGINVPKSVDSAPIRRVNTALRYIALATWKGSHKTKKPAYLVLADELIMAAKGDAKCFSVGKKEEVERIAKSAR</sequence>
<name>RS7_METLZ</name>
<reference key="1">
    <citation type="journal article" date="2009" name="Stand. Genomic Sci.">
        <title>Complete genome sequence of Methanocorpusculum labreanum type strain Z.</title>
        <authorList>
            <person name="Anderson I.J."/>
            <person name="Sieprawska-Lupa M."/>
            <person name="Goltsman E."/>
            <person name="Lapidus A."/>
            <person name="Copeland A."/>
            <person name="Glavina Del Rio T."/>
            <person name="Tice H."/>
            <person name="Dalin E."/>
            <person name="Barry K."/>
            <person name="Pitluck S."/>
            <person name="Hauser L."/>
            <person name="Land M."/>
            <person name="Lucas S."/>
            <person name="Richardson P."/>
            <person name="Whitman W.B."/>
            <person name="Kyrpides N.C."/>
        </authorList>
    </citation>
    <scope>NUCLEOTIDE SEQUENCE [LARGE SCALE GENOMIC DNA]</scope>
    <source>
        <strain>ATCC 43576 / DSM 4855 / Z</strain>
    </source>
</reference>
<feature type="chain" id="PRO_0000344313" description="Small ribosomal subunit protein uS7">
    <location>
        <begin position="1"/>
        <end position="194"/>
    </location>
</feature>
<evidence type="ECO:0000255" key="1">
    <source>
        <dbReference type="HAMAP-Rule" id="MF_00480"/>
    </source>
</evidence>
<evidence type="ECO:0000305" key="2"/>
<protein>
    <recommendedName>
        <fullName evidence="1">Small ribosomal subunit protein uS7</fullName>
    </recommendedName>
    <alternativeName>
        <fullName evidence="2">30S ribosomal protein S7</fullName>
    </alternativeName>
</protein>
<proteinExistence type="inferred from homology"/>
<comment type="function">
    <text evidence="1">One of the primary rRNA binding proteins, it binds directly to 16S rRNA where it nucleates assembly of the head domain of the 30S subunit. Is located at the subunit interface close to the decoding center.</text>
</comment>
<comment type="subunit">
    <text evidence="1">Part of the 30S ribosomal subunit.</text>
</comment>
<comment type="similarity">
    <text evidence="1">Belongs to the universal ribosomal protein uS7 family.</text>
</comment>